<evidence type="ECO:0000250" key="1"/>
<evidence type="ECO:0000255" key="2">
    <source>
        <dbReference type="HAMAP-Rule" id="MF_01326"/>
    </source>
</evidence>
<evidence type="ECO:0000305" key="3"/>
<gene>
    <name evidence="2" type="primary">rplX</name>
    <name type="ordered locus">Z4679</name>
    <name type="ordered locus">ECs4174</name>
</gene>
<feature type="initiator methionine" description="Removed" evidence="1">
    <location>
        <position position="1"/>
    </location>
</feature>
<feature type="chain" id="PRO_0000130656" description="Large ribosomal subunit protein uL24">
    <location>
        <begin position="2"/>
        <end position="104"/>
    </location>
</feature>
<accession>P60625</accession>
<accession>P02425</accession>
<accession>P37438</accession>
<name>RL24_ECO57</name>
<dbReference type="EMBL" id="AE005174">
    <property type="protein sequence ID" value="AAG58430.1"/>
    <property type="molecule type" value="Genomic_DNA"/>
</dbReference>
<dbReference type="EMBL" id="BA000007">
    <property type="protein sequence ID" value="BAB37597.1"/>
    <property type="molecule type" value="Genomic_DNA"/>
</dbReference>
<dbReference type="PIR" id="B85996">
    <property type="entry name" value="B85996"/>
</dbReference>
<dbReference type="PIR" id="F91150">
    <property type="entry name" value="F91150"/>
</dbReference>
<dbReference type="RefSeq" id="NP_312201.1">
    <property type="nucleotide sequence ID" value="NC_002695.1"/>
</dbReference>
<dbReference type="RefSeq" id="WP_000729185.1">
    <property type="nucleotide sequence ID" value="NZ_VOAI01000041.1"/>
</dbReference>
<dbReference type="SMR" id="P60625"/>
<dbReference type="STRING" id="155864.Z4679"/>
<dbReference type="GeneID" id="915974"/>
<dbReference type="GeneID" id="93778678"/>
<dbReference type="KEGG" id="ece:Z4679"/>
<dbReference type="KEGG" id="ecs:ECs_4174"/>
<dbReference type="PATRIC" id="fig|386585.9.peg.4357"/>
<dbReference type="eggNOG" id="COG0198">
    <property type="taxonomic scope" value="Bacteria"/>
</dbReference>
<dbReference type="HOGENOM" id="CLU_093315_2_2_6"/>
<dbReference type="OMA" id="HISNLML"/>
<dbReference type="Proteomes" id="UP000000558">
    <property type="component" value="Chromosome"/>
</dbReference>
<dbReference type="Proteomes" id="UP000002519">
    <property type="component" value="Chromosome"/>
</dbReference>
<dbReference type="GO" id="GO:0005829">
    <property type="term" value="C:cytosol"/>
    <property type="evidence" value="ECO:0007669"/>
    <property type="project" value="UniProtKB-ARBA"/>
</dbReference>
<dbReference type="GO" id="GO:1990904">
    <property type="term" value="C:ribonucleoprotein complex"/>
    <property type="evidence" value="ECO:0007669"/>
    <property type="project" value="UniProtKB-KW"/>
</dbReference>
<dbReference type="GO" id="GO:0005840">
    <property type="term" value="C:ribosome"/>
    <property type="evidence" value="ECO:0007669"/>
    <property type="project" value="UniProtKB-KW"/>
</dbReference>
<dbReference type="GO" id="GO:0019843">
    <property type="term" value="F:rRNA binding"/>
    <property type="evidence" value="ECO:0007669"/>
    <property type="project" value="UniProtKB-UniRule"/>
</dbReference>
<dbReference type="GO" id="GO:0003735">
    <property type="term" value="F:structural constituent of ribosome"/>
    <property type="evidence" value="ECO:0007669"/>
    <property type="project" value="InterPro"/>
</dbReference>
<dbReference type="GO" id="GO:0006412">
    <property type="term" value="P:translation"/>
    <property type="evidence" value="ECO:0007669"/>
    <property type="project" value="UniProtKB-UniRule"/>
</dbReference>
<dbReference type="CDD" id="cd06089">
    <property type="entry name" value="KOW_RPL26"/>
    <property type="match status" value="1"/>
</dbReference>
<dbReference type="FunFam" id="2.30.30.30:FF:000004">
    <property type="entry name" value="50S ribosomal protein L24"/>
    <property type="match status" value="1"/>
</dbReference>
<dbReference type="Gene3D" id="2.30.30.30">
    <property type="match status" value="1"/>
</dbReference>
<dbReference type="HAMAP" id="MF_01326_B">
    <property type="entry name" value="Ribosomal_uL24_B"/>
    <property type="match status" value="1"/>
</dbReference>
<dbReference type="InterPro" id="IPR005824">
    <property type="entry name" value="KOW"/>
</dbReference>
<dbReference type="InterPro" id="IPR014722">
    <property type="entry name" value="Rib_uL2_dom2"/>
</dbReference>
<dbReference type="InterPro" id="IPR003256">
    <property type="entry name" value="Ribosomal_uL24"/>
</dbReference>
<dbReference type="InterPro" id="IPR005825">
    <property type="entry name" value="Ribosomal_uL24_CS"/>
</dbReference>
<dbReference type="InterPro" id="IPR041988">
    <property type="entry name" value="Ribosomal_uL24_KOW"/>
</dbReference>
<dbReference type="InterPro" id="IPR008991">
    <property type="entry name" value="Translation_prot_SH3-like_sf"/>
</dbReference>
<dbReference type="NCBIfam" id="TIGR01079">
    <property type="entry name" value="rplX_bact"/>
    <property type="match status" value="1"/>
</dbReference>
<dbReference type="PANTHER" id="PTHR12903">
    <property type="entry name" value="MITOCHONDRIAL RIBOSOMAL PROTEIN L24"/>
    <property type="match status" value="1"/>
</dbReference>
<dbReference type="Pfam" id="PF00467">
    <property type="entry name" value="KOW"/>
    <property type="match status" value="1"/>
</dbReference>
<dbReference type="Pfam" id="PF17136">
    <property type="entry name" value="ribosomal_L24"/>
    <property type="match status" value="1"/>
</dbReference>
<dbReference type="SMART" id="SM00739">
    <property type="entry name" value="KOW"/>
    <property type="match status" value="1"/>
</dbReference>
<dbReference type="SUPFAM" id="SSF50104">
    <property type="entry name" value="Translation proteins SH3-like domain"/>
    <property type="match status" value="1"/>
</dbReference>
<dbReference type="PROSITE" id="PS01108">
    <property type="entry name" value="RIBOSOMAL_L24"/>
    <property type="match status" value="1"/>
</dbReference>
<reference key="1">
    <citation type="journal article" date="2001" name="Nature">
        <title>Genome sequence of enterohaemorrhagic Escherichia coli O157:H7.</title>
        <authorList>
            <person name="Perna N.T."/>
            <person name="Plunkett G. III"/>
            <person name="Burland V."/>
            <person name="Mau B."/>
            <person name="Glasner J.D."/>
            <person name="Rose D.J."/>
            <person name="Mayhew G.F."/>
            <person name="Evans P.S."/>
            <person name="Gregor J."/>
            <person name="Kirkpatrick H.A."/>
            <person name="Posfai G."/>
            <person name="Hackett J."/>
            <person name="Klink S."/>
            <person name="Boutin A."/>
            <person name="Shao Y."/>
            <person name="Miller L."/>
            <person name="Grotbeck E.J."/>
            <person name="Davis N.W."/>
            <person name="Lim A."/>
            <person name="Dimalanta E.T."/>
            <person name="Potamousis K."/>
            <person name="Apodaca J."/>
            <person name="Anantharaman T.S."/>
            <person name="Lin J."/>
            <person name="Yen G."/>
            <person name="Schwartz D.C."/>
            <person name="Welch R.A."/>
            <person name="Blattner F.R."/>
        </authorList>
    </citation>
    <scope>NUCLEOTIDE SEQUENCE [LARGE SCALE GENOMIC DNA]</scope>
    <source>
        <strain>O157:H7 / EDL933 / ATCC 700927 / EHEC</strain>
    </source>
</reference>
<reference key="2">
    <citation type="journal article" date="2001" name="DNA Res.">
        <title>Complete genome sequence of enterohemorrhagic Escherichia coli O157:H7 and genomic comparison with a laboratory strain K-12.</title>
        <authorList>
            <person name="Hayashi T."/>
            <person name="Makino K."/>
            <person name="Ohnishi M."/>
            <person name="Kurokawa K."/>
            <person name="Ishii K."/>
            <person name="Yokoyama K."/>
            <person name="Han C.-G."/>
            <person name="Ohtsubo E."/>
            <person name="Nakayama K."/>
            <person name="Murata T."/>
            <person name="Tanaka M."/>
            <person name="Tobe T."/>
            <person name="Iida T."/>
            <person name="Takami H."/>
            <person name="Honda T."/>
            <person name="Sasakawa C."/>
            <person name="Ogasawara N."/>
            <person name="Yasunaga T."/>
            <person name="Kuhara S."/>
            <person name="Shiba T."/>
            <person name="Hattori M."/>
            <person name="Shinagawa H."/>
        </authorList>
    </citation>
    <scope>NUCLEOTIDE SEQUENCE [LARGE SCALE GENOMIC DNA]</scope>
    <source>
        <strain>O157:H7 / Sakai / RIMD 0509952 / EHEC</strain>
    </source>
</reference>
<keyword id="KW-1185">Reference proteome</keyword>
<keyword id="KW-0687">Ribonucleoprotein</keyword>
<keyword id="KW-0689">Ribosomal protein</keyword>
<keyword id="KW-0694">RNA-binding</keyword>
<keyword id="KW-0699">rRNA-binding</keyword>
<sequence length="104" mass="11316">MAAKIRRDDEVIVLTGKDKGKRGKVKNVLSSGKVIVEGINLVKKHQKPVPALNQPGGIVEKEAAIQVSNVAIFNAATGKADRVGFRFEDGKKVRFFKSNSETIK</sequence>
<protein>
    <recommendedName>
        <fullName evidence="2">Large ribosomal subunit protein uL24</fullName>
    </recommendedName>
    <alternativeName>
        <fullName evidence="3">50S ribosomal protein L24</fullName>
    </alternativeName>
</protein>
<proteinExistence type="inferred from homology"/>
<comment type="function">
    <text evidence="2">One of two assembly initiator proteins, it binds directly to the 5'-end of the 23S rRNA, where it nucleates assembly of the 50S subunit.</text>
</comment>
<comment type="function">
    <text evidence="2">One of the proteins that surrounds the polypeptide exit tunnel on the outside of the subunit.</text>
</comment>
<comment type="subunit">
    <text evidence="2">Part of the 50S ribosomal subunit.</text>
</comment>
<comment type="similarity">
    <text evidence="2">Belongs to the universal ribosomal protein uL24 family.</text>
</comment>
<organism>
    <name type="scientific">Escherichia coli O157:H7</name>
    <dbReference type="NCBI Taxonomy" id="83334"/>
    <lineage>
        <taxon>Bacteria</taxon>
        <taxon>Pseudomonadati</taxon>
        <taxon>Pseudomonadota</taxon>
        <taxon>Gammaproteobacteria</taxon>
        <taxon>Enterobacterales</taxon>
        <taxon>Enterobacteriaceae</taxon>
        <taxon>Escherichia</taxon>
    </lineage>
</organism>